<comment type="function">
    <text evidence="1">Involved in pre-rRNA and tRNA processing. Utilizes the methyl donor S-adenosyl-L-methionine to catalyze the site-specific 2'-hydroxyl methylation of ribose moieties in rRNA and tRNA. Site specificity is provided by a guide RNA that base pairs with the substrate. Methylation occurs at a characteristic distance from the sequence involved in base pairing with the guide RNA.</text>
</comment>
<comment type="subunit">
    <text evidence="1">Interacts with nop5. Component of box C/D small ribonucleoprotein (sRNP) particles that contain rpl7ae, FlpA and nop5, plus a guide RNA.</text>
</comment>
<comment type="similarity">
    <text evidence="1">Belongs to the methyltransferase superfamily. Fibrillarin family.</text>
</comment>
<sequence>MKVKKHRFPGVYIVIDDDGSEKIATKNLVPGQRVYGERVIKFEGEEYRIWNPSRSKLGAAILNGLKNFPIKPGSTVLYLGIASGTTASHVSDIVGWEGKIFGVEFSPRVLRELVPIVEERRNIVPILGDATKPEGYRALVPKVDVIFEDVAQPTQAKILIDNAKVFLKSGGYGMISVKSRSIDVTKEPEEVFKEVERELASYFEVVERLSLEPYEKDHALFVVRKP</sequence>
<gene>
    <name evidence="1" type="primary">flpA</name>
    <name type="ordered locus">TGAM_0463</name>
</gene>
<protein>
    <recommendedName>
        <fullName evidence="1">Fibrillarin-like rRNA/tRNA 2'-O-methyltransferase</fullName>
        <ecNumber evidence="1">2.1.1.-</ecNumber>
    </recommendedName>
</protein>
<organism>
    <name type="scientific">Thermococcus gammatolerans (strain DSM 15229 / JCM 11827 / EJ3)</name>
    <dbReference type="NCBI Taxonomy" id="593117"/>
    <lineage>
        <taxon>Archaea</taxon>
        <taxon>Methanobacteriati</taxon>
        <taxon>Methanobacteriota</taxon>
        <taxon>Thermococci</taxon>
        <taxon>Thermococcales</taxon>
        <taxon>Thermococcaceae</taxon>
        <taxon>Thermococcus</taxon>
    </lineage>
</organism>
<name>FLPA_THEGJ</name>
<proteinExistence type="inferred from homology"/>
<keyword id="KW-0489">Methyltransferase</keyword>
<keyword id="KW-1185">Reference proteome</keyword>
<keyword id="KW-0694">RNA-binding</keyword>
<keyword id="KW-0698">rRNA processing</keyword>
<keyword id="KW-0808">Transferase</keyword>
<keyword id="KW-0819">tRNA processing</keyword>
<evidence type="ECO:0000255" key="1">
    <source>
        <dbReference type="HAMAP-Rule" id="MF_00351"/>
    </source>
</evidence>
<accession>C5A403</accession>
<feature type="chain" id="PRO_1000205347" description="Fibrillarin-like rRNA/tRNA 2'-O-methyltransferase">
    <location>
        <begin position="1"/>
        <end position="226"/>
    </location>
</feature>
<feature type="binding site" evidence="1">
    <location>
        <begin position="85"/>
        <end position="86"/>
    </location>
    <ligand>
        <name>S-adenosyl-L-methionine</name>
        <dbReference type="ChEBI" id="CHEBI:59789"/>
    </ligand>
</feature>
<feature type="binding site" evidence="1">
    <location>
        <begin position="104"/>
        <end position="105"/>
    </location>
    <ligand>
        <name>S-adenosyl-L-methionine</name>
        <dbReference type="ChEBI" id="CHEBI:59789"/>
    </ligand>
</feature>
<feature type="binding site" evidence="1">
    <location>
        <begin position="129"/>
        <end position="130"/>
    </location>
    <ligand>
        <name>S-adenosyl-L-methionine</name>
        <dbReference type="ChEBI" id="CHEBI:59789"/>
    </ligand>
</feature>
<feature type="binding site" evidence="1">
    <location>
        <begin position="149"/>
        <end position="152"/>
    </location>
    <ligand>
        <name>S-adenosyl-L-methionine</name>
        <dbReference type="ChEBI" id="CHEBI:59789"/>
    </ligand>
</feature>
<dbReference type="EC" id="2.1.1.-" evidence="1"/>
<dbReference type="EMBL" id="CP001398">
    <property type="protein sequence ID" value="ACS32965.1"/>
    <property type="molecule type" value="Genomic_DNA"/>
</dbReference>
<dbReference type="RefSeq" id="WP_015858083.1">
    <property type="nucleotide sequence ID" value="NC_012804.1"/>
</dbReference>
<dbReference type="SMR" id="C5A403"/>
<dbReference type="STRING" id="593117.TGAM_0463"/>
<dbReference type="PaxDb" id="593117-TGAM_0463"/>
<dbReference type="GeneID" id="7988010"/>
<dbReference type="KEGG" id="tga:TGAM_0463"/>
<dbReference type="PATRIC" id="fig|593117.10.peg.459"/>
<dbReference type="eggNOG" id="arCOG00078">
    <property type="taxonomic scope" value="Archaea"/>
</dbReference>
<dbReference type="HOGENOM" id="CLU_059055_2_0_2"/>
<dbReference type="OrthoDB" id="6244at2157"/>
<dbReference type="Proteomes" id="UP000001488">
    <property type="component" value="Chromosome"/>
</dbReference>
<dbReference type="GO" id="GO:1990259">
    <property type="term" value="F:histone H2AQ104 methyltransferase activity"/>
    <property type="evidence" value="ECO:0007669"/>
    <property type="project" value="TreeGrafter"/>
</dbReference>
<dbReference type="GO" id="GO:0003723">
    <property type="term" value="F:RNA binding"/>
    <property type="evidence" value="ECO:0007669"/>
    <property type="project" value="UniProtKB-UniRule"/>
</dbReference>
<dbReference type="GO" id="GO:0008649">
    <property type="term" value="F:rRNA methyltransferase activity"/>
    <property type="evidence" value="ECO:0007669"/>
    <property type="project" value="TreeGrafter"/>
</dbReference>
<dbReference type="GO" id="GO:0000494">
    <property type="term" value="P:box C/D sno(s)RNA 3'-end processing"/>
    <property type="evidence" value="ECO:0007669"/>
    <property type="project" value="TreeGrafter"/>
</dbReference>
<dbReference type="GO" id="GO:0008033">
    <property type="term" value="P:tRNA processing"/>
    <property type="evidence" value="ECO:0007669"/>
    <property type="project" value="UniProtKB-UniRule"/>
</dbReference>
<dbReference type="CDD" id="cd02440">
    <property type="entry name" value="AdoMet_MTases"/>
    <property type="match status" value="1"/>
</dbReference>
<dbReference type="FunFam" id="3.30.200.20:FF:000613">
    <property type="entry name" value="Fibrillarin-like rRNA/tRNA 2'-O-methyltransferase"/>
    <property type="match status" value="1"/>
</dbReference>
<dbReference type="Gene3D" id="3.30.200.20">
    <property type="entry name" value="Phosphorylase Kinase, domain 1"/>
    <property type="match status" value="1"/>
</dbReference>
<dbReference type="Gene3D" id="3.40.50.150">
    <property type="entry name" value="Vaccinia Virus protein VP39"/>
    <property type="match status" value="1"/>
</dbReference>
<dbReference type="HAMAP" id="MF_00351">
    <property type="entry name" value="RNA_methyltransf_FlpA"/>
    <property type="match status" value="1"/>
</dbReference>
<dbReference type="InterPro" id="IPR000692">
    <property type="entry name" value="Fibrillarin"/>
</dbReference>
<dbReference type="InterPro" id="IPR020813">
    <property type="entry name" value="Fibrillarin_CS"/>
</dbReference>
<dbReference type="InterPro" id="IPR029063">
    <property type="entry name" value="SAM-dependent_MTases_sf"/>
</dbReference>
<dbReference type="NCBIfam" id="NF003276">
    <property type="entry name" value="PRK04266.1-2"/>
    <property type="match status" value="1"/>
</dbReference>
<dbReference type="NCBIfam" id="NF003277">
    <property type="entry name" value="PRK04266.1-3"/>
    <property type="match status" value="1"/>
</dbReference>
<dbReference type="PANTHER" id="PTHR10335:SF17">
    <property type="entry name" value="FIBRILLARIN"/>
    <property type="match status" value="1"/>
</dbReference>
<dbReference type="PANTHER" id="PTHR10335">
    <property type="entry name" value="RRNA 2-O-METHYLTRANSFERASE FIBRILLARIN"/>
    <property type="match status" value="1"/>
</dbReference>
<dbReference type="Pfam" id="PF01269">
    <property type="entry name" value="Fibrillarin"/>
    <property type="match status" value="1"/>
</dbReference>
<dbReference type="PIRSF" id="PIRSF006540">
    <property type="entry name" value="Nop17p"/>
    <property type="match status" value="1"/>
</dbReference>
<dbReference type="PRINTS" id="PR00052">
    <property type="entry name" value="FIBRILLARIN"/>
</dbReference>
<dbReference type="SMART" id="SM01206">
    <property type="entry name" value="Fibrillarin"/>
    <property type="match status" value="1"/>
</dbReference>
<dbReference type="SUPFAM" id="SSF53335">
    <property type="entry name" value="S-adenosyl-L-methionine-dependent methyltransferases"/>
    <property type="match status" value="1"/>
</dbReference>
<dbReference type="PROSITE" id="PS00566">
    <property type="entry name" value="FIBRILLARIN"/>
    <property type="match status" value="1"/>
</dbReference>
<reference key="1">
    <citation type="journal article" date="2007" name="Genome Biol.">
        <title>Genome analysis and genome-wide proteomics of Thermococcus gammatolerans, the most radioresistant organism known amongst the Archaea.</title>
        <authorList>
            <person name="Zivanovic Y."/>
            <person name="Armengaud J."/>
            <person name="Lagorce A."/>
            <person name="Leplat C."/>
            <person name="Guerin P."/>
            <person name="Dutertre M."/>
            <person name="Anthouard V."/>
            <person name="Forterre P."/>
            <person name="Wincker P."/>
            <person name="Confalonieri F."/>
        </authorList>
    </citation>
    <scope>NUCLEOTIDE SEQUENCE [LARGE SCALE GENOMIC DNA]</scope>
    <source>
        <strain>DSM 15229 / JCM 11827 / EJ3</strain>
    </source>
</reference>